<feature type="chain" id="PRO_0000169892" description="Galactose-1-phosphate uridylyltransferase">
    <location>
        <begin position="1"/>
        <end position="382"/>
    </location>
</feature>
<feature type="active site" description="Tele-UMP-histidine intermediate" evidence="3">
    <location>
        <position position="198"/>
    </location>
</feature>
<feature type="binding site" evidence="3">
    <location>
        <position position="52"/>
    </location>
    <ligand>
        <name>Zn(2+)</name>
        <dbReference type="ChEBI" id="CHEBI:29105"/>
    </ligand>
</feature>
<feature type="binding site" evidence="3">
    <location>
        <position position="55"/>
    </location>
    <ligand>
        <name>Zn(2+)</name>
        <dbReference type="ChEBI" id="CHEBI:29105"/>
    </ligand>
</feature>
<feature type="binding site" description="in other chain" evidence="1">
    <location>
        <position position="61"/>
    </location>
    <ligand>
        <name>UDP-alpha-D-glucose</name>
        <dbReference type="ChEBI" id="CHEBI:58885"/>
        <note>ligand shared between dimeric partners</note>
    </ligand>
</feature>
<feature type="binding site" description="in other chain" evidence="1">
    <location>
        <begin position="77"/>
        <end position="78"/>
    </location>
    <ligand>
        <name>UDP-alpha-D-glucose</name>
        <dbReference type="ChEBI" id="CHEBI:58885"/>
        <note>ligand shared between dimeric partners</note>
    </ligand>
</feature>
<feature type="binding site" evidence="3">
    <location>
        <position position="121"/>
    </location>
    <ligand>
        <name>Zn(2+)</name>
        <dbReference type="ChEBI" id="CHEBI:29105"/>
    </ligand>
</feature>
<feature type="binding site" evidence="1">
    <location>
        <position position="185"/>
    </location>
    <ligand>
        <name>UDP-alpha-D-glucose</name>
        <dbReference type="ChEBI" id="CHEBI:58885"/>
        <note>ligand shared between dimeric partners</note>
    </ligand>
</feature>
<feature type="binding site" evidence="3">
    <location>
        <position position="196"/>
    </location>
    <ligand>
        <name>Zn(2+)</name>
        <dbReference type="ChEBI" id="CHEBI:29105"/>
    </ligand>
</feature>
<feature type="binding site" description="in other chain" evidence="1">
    <location>
        <position position="200"/>
    </location>
    <ligand>
        <name>UDP-alpha-D-glucose</name>
        <dbReference type="ChEBI" id="CHEBI:58885"/>
        <note>ligand shared between dimeric partners</note>
    </ligand>
</feature>
<feature type="binding site" evidence="2">
    <location>
        <position position="214"/>
    </location>
    <ligand>
        <name>Fe cation</name>
        <dbReference type="ChEBI" id="CHEBI:24875"/>
    </ligand>
</feature>
<feature type="binding site" evidence="2">
    <location>
        <position position="313"/>
    </location>
    <ligand>
        <name>Fe cation</name>
        <dbReference type="ChEBI" id="CHEBI:24875"/>
    </ligand>
</feature>
<feature type="binding site" evidence="2">
    <location>
        <position position="330"/>
    </location>
    <ligand>
        <name>Fe cation</name>
        <dbReference type="ChEBI" id="CHEBI:24875"/>
    </ligand>
</feature>
<feature type="binding site" evidence="2">
    <location>
        <position position="332"/>
    </location>
    <ligand>
        <name>Fe cation</name>
        <dbReference type="ChEBI" id="CHEBI:24875"/>
    </ligand>
</feature>
<feature type="binding site" description="in other chain" evidence="1">
    <location>
        <begin position="345"/>
        <end position="348"/>
    </location>
    <ligand>
        <name>UDP-alpha-D-glucose</name>
        <dbReference type="ChEBI" id="CHEBI:58885"/>
        <note>ligand shared between dimeric partners</note>
    </ligand>
</feature>
<feature type="binding site" description="in other chain" evidence="1">
    <location>
        <begin position="350"/>
        <end position="351"/>
    </location>
    <ligand>
        <name>UDP-alpha-D-glucose</name>
        <dbReference type="ChEBI" id="CHEBI:58885"/>
        <note>ligand shared between dimeric partners</note>
    </ligand>
</feature>
<proteinExistence type="inferred from homology"/>
<name>GAL7_HYPJE</name>
<sequence length="382" mass="43781">MPDKILDDISHRRYNPLTDSWLLVSPHRTKRPWQGQQEGAAVTTLPEYDPKCYLCPGNSRAAGDQNPNYEQTFAFVNDYSAVKEQQPDYEVDQSSDDLESLLLRAQGVKGVCYVLTFSPKHNVTLADMSAKDILPTINHWTRLYANHLSPSNPLSAVAAQLQLPISKEEAPVPKDNYRYMQIFENKGAAMGCSNPHPHCQAWTTSTMPEEPGKELVQMAKYRQQHGRHLLADYIKLELAKEERVVWQNDSFVVVCPWWAIWPFEVLVLPKRHVRALVDLTADERLQLAEAIQEVTRRYDNLFECHFPYSSGIHQAPLDGTPEEIENAYFHMHFYPPLLRSATVKKFLVGFELMAEAQRDITPEQATIRLRACDGELYRNKLS</sequence>
<gene>
    <name type="primary">gal7</name>
</gene>
<evidence type="ECO:0000250" key="1">
    <source>
        <dbReference type="UniProtKB" id="P07902"/>
    </source>
</evidence>
<evidence type="ECO:0000250" key="2">
    <source>
        <dbReference type="UniProtKB" id="P09148"/>
    </source>
</evidence>
<evidence type="ECO:0000255" key="3">
    <source>
        <dbReference type="PROSITE-ProRule" id="PRU10033"/>
    </source>
</evidence>
<evidence type="ECO:0000269" key="4">
    <source>
    </source>
</evidence>
<evidence type="ECO:0000305" key="5"/>
<comment type="function">
    <text evidence="4">Essential for growth on galactose but not for cellulase induction.</text>
</comment>
<comment type="catalytic activity">
    <reaction evidence="2">
        <text>alpha-D-galactose 1-phosphate + UDP-alpha-D-glucose = alpha-D-glucose 1-phosphate + UDP-alpha-D-galactose</text>
        <dbReference type="Rhea" id="RHEA:13989"/>
        <dbReference type="ChEBI" id="CHEBI:58336"/>
        <dbReference type="ChEBI" id="CHEBI:58601"/>
        <dbReference type="ChEBI" id="CHEBI:58885"/>
        <dbReference type="ChEBI" id="CHEBI:66914"/>
        <dbReference type="EC" id="2.7.7.12"/>
    </reaction>
</comment>
<comment type="cofactor">
    <cofactor evidence="2">
        <name>Zn(2+)</name>
        <dbReference type="ChEBI" id="CHEBI:29105"/>
    </cofactor>
    <text evidence="2">Binds 1 zinc ion per subunit. Zinc binding seems to play a structural role.</text>
</comment>
<comment type="pathway">
    <text>Carbohydrate metabolism; galactose metabolism.</text>
</comment>
<comment type="subunit">
    <text evidence="1">Homodimer.</text>
</comment>
<comment type="similarity">
    <text evidence="5">Belongs to the galactose-1-phosphate uridylyltransferase type 1 family.</text>
</comment>
<protein>
    <recommendedName>
        <fullName>Galactose-1-phosphate uridylyltransferase</fullName>
        <shortName>Gal-1-P uridylyltransferase</shortName>
        <ecNumber evidence="2">2.7.7.12</ecNumber>
    </recommendedName>
    <alternativeName>
        <fullName>UDP-glucose--hexose-1-phosphate uridylyltransferase</fullName>
    </alternativeName>
</protein>
<keyword id="KW-0119">Carbohydrate metabolism</keyword>
<keyword id="KW-0299">Galactose metabolism</keyword>
<keyword id="KW-0408">Iron</keyword>
<keyword id="KW-0479">Metal-binding</keyword>
<keyword id="KW-0548">Nucleotidyltransferase</keyword>
<keyword id="KW-0808">Transferase</keyword>
<keyword id="KW-0862">Zinc</keyword>
<reference key="1">
    <citation type="journal article" date="2002" name="Mol. Genet. Genomics">
        <title>Lactose metabolism and cellulase production in Hypocrea jecorina: the gal7 gene, encoding galactose-1-phosphate uridylyltransferase, is essential for growth on galactose but not for cellulase induction.</title>
        <authorList>
            <person name="Seiboth B."/>
            <person name="Hofmann G."/>
            <person name="Kubicek C.P."/>
        </authorList>
    </citation>
    <scope>NUCLEOTIDE SEQUENCE [GENOMIC DNA]</scope>
    <scope>FUNCTION</scope>
    <source>
        <strain>ATCC 26921 / CBS 392.92 / QM9414</strain>
    </source>
</reference>
<accession>Q96UI1</accession>
<dbReference type="EC" id="2.7.7.12" evidence="2"/>
<dbReference type="EMBL" id="AY057108">
    <property type="protein sequence ID" value="AAL14201.1"/>
    <property type="molecule type" value="Genomic_DNA"/>
</dbReference>
<dbReference type="SMR" id="Q96UI1"/>
<dbReference type="UniPathway" id="UPA00214"/>
<dbReference type="GO" id="GO:0005737">
    <property type="term" value="C:cytoplasm"/>
    <property type="evidence" value="ECO:0007669"/>
    <property type="project" value="TreeGrafter"/>
</dbReference>
<dbReference type="GO" id="GO:0008108">
    <property type="term" value="F:UDP-glucose:hexose-1-phosphate uridylyltransferase activity"/>
    <property type="evidence" value="ECO:0007669"/>
    <property type="project" value="UniProtKB-EC"/>
</dbReference>
<dbReference type="GO" id="GO:0008270">
    <property type="term" value="F:zinc ion binding"/>
    <property type="evidence" value="ECO:0007669"/>
    <property type="project" value="InterPro"/>
</dbReference>
<dbReference type="GO" id="GO:0033499">
    <property type="term" value="P:galactose catabolic process via UDP-galactose, Leloir pathway"/>
    <property type="evidence" value="ECO:0007669"/>
    <property type="project" value="TreeGrafter"/>
</dbReference>
<dbReference type="CDD" id="cd00608">
    <property type="entry name" value="GalT"/>
    <property type="match status" value="1"/>
</dbReference>
<dbReference type="FunFam" id="3.30.428.10:FF:000001">
    <property type="entry name" value="Galactose-1-phosphate uridylyltransferase"/>
    <property type="match status" value="1"/>
</dbReference>
<dbReference type="FunFam" id="3.30.428.10:FF:000009">
    <property type="entry name" value="Galactose-1-phosphate uridylyltransferase"/>
    <property type="match status" value="1"/>
</dbReference>
<dbReference type="Gene3D" id="3.30.428.10">
    <property type="entry name" value="HIT-like"/>
    <property type="match status" value="2"/>
</dbReference>
<dbReference type="InterPro" id="IPR001937">
    <property type="entry name" value="GalP_UDPtransf1"/>
</dbReference>
<dbReference type="InterPro" id="IPR019779">
    <property type="entry name" value="GalP_UDPtransf1_His-AS"/>
</dbReference>
<dbReference type="InterPro" id="IPR005850">
    <property type="entry name" value="GalP_Utransf_C"/>
</dbReference>
<dbReference type="InterPro" id="IPR005849">
    <property type="entry name" value="GalP_Utransf_N"/>
</dbReference>
<dbReference type="InterPro" id="IPR036265">
    <property type="entry name" value="HIT-like_sf"/>
</dbReference>
<dbReference type="NCBIfam" id="TIGR00209">
    <property type="entry name" value="galT_1"/>
    <property type="match status" value="1"/>
</dbReference>
<dbReference type="PANTHER" id="PTHR11943">
    <property type="entry name" value="GALACTOSE-1-PHOSPHATE URIDYLYLTRANSFERASE"/>
    <property type="match status" value="1"/>
</dbReference>
<dbReference type="PANTHER" id="PTHR11943:SF1">
    <property type="entry name" value="GALACTOSE-1-PHOSPHATE URIDYLYLTRANSFERASE"/>
    <property type="match status" value="1"/>
</dbReference>
<dbReference type="Pfam" id="PF02744">
    <property type="entry name" value="GalP_UDP_tr_C"/>
    <property type="match status" value="1"/>
</dbReference>
<dbReference type="Pfam" id="PF01087">
    <property type="entry name" value="GalP_UDP_transf"/>
    <property type="match status" value="1"/>
</dbReference>
<dbReference type="PIRSF" id="PIRSF000808">
    <property type="entry name" value="GalT"/>
    <property type="match status" value="1"/>
</dbReference>
<dbReference type="SUPFAM" id="SSF54197">
    <property type="entry name" value="HIT-like"/>
    <property type="match status" value="2"/>
</dbReference>
<dbReference type="PROSITE" id="PS00117">
    <property type="entry name" value="GAL_P_UDP_TRANSF_I"/>
    <property type="match status" value="1"/>
</dbReference>
<organism>
    <name type="scientific">Hypocrea jecorina</name>
    <name type="common">Trichoderma reesei</name>
    <dbReference type="NCBI Taxonomy" id="51453"/>
    <lineage>
        <taxon>Eukaryota</taxon>
        <taxon>Fungi</taxon>
        <taxon>Dikarya</taxon>
        <taxon>Ascomycota</taxon>
        <taxon>Pezizomycotina</taxon>
        <taxon>Sordariomycetes</taxon>
        <taxon>Hypocreomycetidae</taxon>
        <taxon>Hypocreales</taxon>
        <taxon>Hypocreaceae</taxon>
        <taxon>Trichoderma</taxon>
    </lineage>
</organism>